<sequence length="374" mass="41342">MNTNLLDFDLDGLAAYCEQLGEKRFRATQLFRWIHQRGASDFDQMSDLAKSLREKLKACAHITALPVLTEHVSADGTVKWLFDVGGGDAVEAVFIPEDDRGTLCVSSQAGCAVGCRFCSTGHQGFSRNLSTGEILAQLWYAEHSLRKRLGTGGERVISNVVMMGMGEPLQNYTALVPALRAMLDDHGYGLSRRRVTVSTSGVVPMIDRLSQDCAVAMAVSLHAPNDELRDPLVPLNRKYPIHELLDACERYLEFAPRDFITFEYCMLDGVNDQPEHARQLIELVRARGDGRSWCKFNLIPFNPFPASGLLRSPAARVTEFASLLSNAGIVTTVRKTRGDDIDAACGQLAGDVKDRTRAAERMARQRTIVLKQVP</sequence>
<accession>A9BMV6</accession>
<gene>
    <name evidence="1" type="primary">rlmN</name>
    <name type="ordered locus">Daci_5022</name>
</gene>
<keyword id="KW-0004">4Fe-4S</keyword>
<keyword id="KW-0963">Cytoplasm</keyword>
<keyword id="KW-1015">Disulfide bond</keyword>
<keyword id="KW-0408">Iron</keyword>
<keyword id="KW-0411">Iron-sulfur</keyword>
<keyword id="KW-0479">Metal-binding</keyword>
<keyword id="KW-0489">Methyltransferase</keyword>
<keyword id="KW-1185">Reference proteome</keyword>
<keyword id="KW-0698">rRNA processing</keyword>
<keyword id="KW-0949">S-adenosyl-L-methionine</keyword>
<keyword id="KW-0808">Transferase</keyword>
<keyword id="KW-0819">tRNA processing</keyword>
<dbReference type="EC" id="2.1.1.192" evidence="1"/>
<dbReference type="EMBL" id="CP000884">
    <property type="protein sequence ID" value="ABX37651.1"/>
    <property type="status" value="ALT_INIT"/>
    <property type="molecule type" value="Genomic_DNA"/>
</dbReference>
<dbReference type="RefSeq" id="WP_043782590.1">
    <property type="nucleotide sequence ID" value="NC_010002.1"/>
</dbReference>
<dbReference type="SMR" id="A9BMV6"/>
<dbReference type="STRING" id="398578.Daci_5022"/>
<dbReference type="GeneID" id="24118087"/>
<dbReference type="KEGG" id="dac:Daci_5022"/>
<dbReference type="eggNOG" id="COG0820">
    <property type="taxonomic scope" value="Bacteria"/>
</dbReference>
<dbReference type="HOGENOM" id="CLU_029101_0_0_4"/>
<dbReference type="Proteomes" id="UP000000784">
    <property type="component" value="Chromosome"/>
</dbReference>
<dbReference type="GO" id="GO:0005737">
    <property type="term" value="C:cytoplasm"/>
    <property type="evidence" value="ECO:0007669"/>
    <property type="project" value="UniProtKB-SubCell"/>
</dbReference>
<dbReference type="GO" id="GO:0051539">
    <property type="term" value="F:4 iron, 4 sulfur cluster binding"/>
    <property type="evidence" value="ECO:0007669"/>
    <property type="project" value="UniProtKB-UniRule"/>
</dbReference>
<dbReference type="GO" id="GO:0046872">
    <property type="term" value="F:metal ion binding"/>
    <property type="evidence" value="ECO:0007669"/>
    <property type="project" value="UniProtKB-KW"/>
</dbReference>
<dbReference type="GO" id="GO:0070040">
    <property type="term" value="F:rRNA (adenine(2503)-C2-)-methyltransferase activity"/>
    <property type="evidence" value="ECO:0007669"/>
    <property type="project" value="UniProtKB-UniRule"/>
</dbReference>
<dbReference type="GO" id="GO:0019843">
    <property type="term" value="F:rRNA binding"/>
    <property type="evidence" value="ECO:0007669"/>
    <property type="project" value="UniProtKB-UniRule"/>
</dbReference>
<dbReference type="GO" id="GO:0002935">
    <property type="term" value="F:tRNA (adenine(37)-C2)-methyltransferase activity"/>
    <property type="evidence" value="ECO:0007669"/>
    <property type="project" value="UniProtKB-UniRule"/>
</dbReference>
<dbReference type="GO" id="GO:0000049">
    <property type="term" value="F:tRNA binding"/>
    <property type="evidence" value="ECO:0007669"/>
    <property type="project" value="UniProtKB-UniRule"/>
</dbReference>
<dbReference type="GO" id="GO:0070475">
    <property type="term" value="P:rRNA base methylation"/>
    <property type="evidence" value="ECO:0007669"/>
    <property type="project" value="UniProtKB-UniRule"/>
</dbReference>
<dbReference type="GO" id="GO:0030488">
    <property type="term" value="P:tRNA methylation"/>
    <property type="evidence" value="ECO:0007669"/>
    <property type="project" value="UniProtKB-UniRule"/>
</dbReference>
<dbReference type="CDD" id="cd01335">
    <property type="entry name" value="Radical_SAM"/>
    <property type="match status" value="1"/>
</dbReference>
<dbReference type="FunFam" id="1.10.150.530:FF:000003">
    <property type="entry name" value="Dual-specificity RNA methyltransferase RlmN"/>
    <property type="match status" value="1"/>
</dbReference>
<dbReference type="FunFam" id="3.20.20.70:FF:000008">
    <property type="entry name" value="Dual-specificity RNA methyltransferase RlmN"/>
    <property type="match status" value="1"/>
</dbReference>
<dbReference type="Gene3D" id="1.10.150.530">
    <property type="match status" value="1"/>
</dbReference>
<dbReference type="Gene3D" id="3.20.20.70">
    <property type="entry name" value="Aldolase class I"/>
    <property type="match status" value="1"/>
</dbReference>
<dbReference type="HAMAP" id="MF_01849">
    <property type="entry name" value="RNA_methyltr_RlmN"/>
    <property type="match status" value="1"/>
</dbReference>
<dbReference type="InterPro" id="IPR013785">
    <property type="entry name" value="Aldolase_TIM"/>
</dbReference>
<dbReference type="InterPro" id="IPR040072">
    <property type="entry name" value="Methyltransferase_A"/>
</dbReference>
<dbReference type="InterPro" id="IPR048641">
    <property type="entry name" value="RlmN_N"/>
</dbReference>
<dbReference type="InterPro" id="IPR027492">
    <property type="entry name" value="RNA_MTrfase_RlmN"/>
</dbReference>
<dbReference type="InterPro" id="IPR004383">
    <property type="entry name" value="rRNA_lsu_MTrfase_RlmN/Cfr"/>
</dbReference>
<dbReference type="InterPro" id="IPR007197">
    <property type="entry name" value="rSAM"/>
</dbReference>
<dbReference type="NCBIfam" id="TIGR00048">
    <property type="entry name" value="rRNA_mod_RlmN"/>
    <property type="match status" value="1"/>
</dbReference>
<dbReference type="PANTHER" id="PTHR30544">
    <property type="entry name" value="23S RRNA METHYLTRANSFERASE"/>
    <property type="match status" value="1"/>
</dbReference>
<dbReference type="PANTHER" id="PTHR30544:SF5">
    <property type="entry name" value="RADICAL SAM CORE DOMAIN-CONTAINING PROTEIN"/>
    <property type="match status" value="1"/>
</dbReference>
<dbReference type="Pfam" id="PF04055">
    <property type="entry name" value="Radical_SAM"/>
    <property type="match status" value="1"/>
</dbReference>
<dbReference type="Pfam" id="PF21016">
    <property type="entry name" value="RlmN_N"/>
    <property type="match status" value="1"/>
</dbReference>
<dbReference type="PIRSF" id="PIRSF006004">
    <property type="entry name" value="CHP00048"/>
    <property type="match status" value="1"/>
</dbReference>
<dbReference type="SFLD" id="SFLDF00275">
    <property type="entry name" value="adenosine_C2_methyltransferase"/>
    <property type="match status" value="1"/>
</dbReference>
<dbReference type="SFLD" id="SFLDS00029">
    <property type="entry name" value="Radical_SAM"/>
    <property type="match status" value="1"/>
</dbReference>
<dbReference type="SUPFAM" id="SSF102114">
    <property type="entry name" value="Radical SAM enzymes"/>
    <property type="match status" value="1"/>
</dbReference>
<dbReference type="PROSITE" id="PS51918">
    <property type="entry name" value="RADICAL_SAM"/>
    <property type="match status" value="1"/>
</dbReference>
<protein>
    <recommendedName>
        <fullName evidence="1">Dual-specificity RNA methyltransferase RlmN</fullName>
        <ecNumber evidence="1">2.1.1.192</ecNumber>
    </recommendedName>
    <alternativeName>
        <fullName evidence="1">23S rRNA (adenine(2503)-C(2))-methyltransferase</fullName>
    </alternativeName>
    <alternativeName>
        <fullName evidence="1">23S rRNA m2A2503 methyltransferase</fullName>
    </alternativeName>
    <alternativeName>
        <fullName evidence="1">Ribosomal RNA large subunit methyltransferase N</fullName>
    </alternativeName>
    <alternativeName>
        <fullName evidence="1">tRNA (adenine(37)-C(2))-methyltransferase</fullName>
    </alternativeName>
    <alternativeName>
        <fullName evidence="1">tRNA m2A37 methyltransferase</fullName>
    </alternativeName>
</protein>
<proteinExistence type="inferred from homology"/>
<reference key="1">
    <citation type="submission" date="2007-11" db="EMBL/GenBank/DDBJ databases">
        <title>Complete sequence of Delftia acidovorans DSM 14801 / SPH-1.</title>
        <authorList>
            <person name="Copeland A."/>
            <person name="Lucas S."/>
            <person name="Lapidus A."/>
            <person name="Barry K."/>
            <person name="Glavina del Rio T."/>
            <person name="Dalin E."/>
            <person name="Tice H."/>
            <person name="Pitluck S."/>
            <person name="Lowry S."/>
            <person name="Clum A."/>
            <person name="Schmutz J."/>
            <person name="Larimer F."/>
            <person name="Land M."/>
            <person name="Hauser L."/>
            <person name="Kyrpides N."/>
            <person name="Kim E."/>
            <person name="Schleheck D."/>
            <person name="Richardson P."/>
        </authorList>
    </citation>
    <scope>NUCLEOTIDE SEQUENCE [LARGE SCALE GENOMIC DNA]</scope>
    <source>
        <strain>DSM 14801 / SPH-1</strain>
    </source>
</reference>
<name>RLMN_DELAS</name>
<comment type="function">
    <text evidence="1">Specifically methylates position 2 of adenine 2503 in 23S rRNA and position 2 of adenine 37 in tRNAs. m2A2503 modification seems to play a crucial role in the proofreading step occurring at the peptidyl transferase center and thus would serve to optimize ribosomal fidelity.</text>
</comment>
<comment type="catalytic activity">
    <reaction evidence="1">
        <text>adenosine(2503) in 23S rRNA + 2 reduced [2Fe-2S]-[ferredoxin] + 2 S-adenosyl-L-methionine = 2-methyladenosine(2503) in 23S rRNA + 5'-deoxyadenosine + L-methionine + 2 oxidized [2Fe-2S]-[ferredoxin] + S-adenosyl-L-homocysteine</text>
        <dbReference type="Rhea" id="RHEA:42916"/>
        <dbReference type="Rhea" id="RHEA-COMP:10000"/>
        <dbReference type="Rhea" id="RHEA-COMP:10001"/>
        <dbReference type="Rhea" id="RHEA-COMP:10152"/>
        <dbReference type="Rhea" id="RHEA-COMP:10282"/>
        <dbReference type="ChEBI" id="CHEBI:17319"/>
        <dbReference type="ChEBI" id="CHEBI:33737"/>
        <dbReference type="ChEBI" id="CHEBI:33738"/>
        <dbReference type="ChEBI" id="CHEBI:57844"/>
        <dbReference type="ChEBI" id="CHEBI:57856"/>
        <dbReference type="ChEBI" id="CHEBI:59789"/>
        <dbReference type="ChEBI" id="CHEBI:74411"/>
        <dbReference type="ChEBI" id="CHEBI:74497"/>
        <dbReference type="EC" id="2.1.1.192"/>
    </reaction>
</comment>
<comment type="catalytic activity">
    <reaction evidence="1">
        <text>adenosine(37) in tRNA + 2 reduced [2Fe-2S]-[ferredoxin] + 2 S-adenosyl-L-methionine = 2-methyladenosine(37) in tRNA + 5'-deoxyadenosine + L-methionine + 2 oxidized [2Fe-2S]-[ferredoxin] + S-adenosyl-L-homocysteine</text>
        <dbReference type="Rhea" id="RHEA:43332"/>
        <dbReference type="Rhea" id="RHEA-COMP:10000"/>
        <dbReference type="Rhea" id="RHEA-COMP:10001"/>
        <dbReference type="Rhea" id="RHEA-COMP:10162"/>
        <dbReference type="Rhea" id="RHEA-COMP:10485"/>
        <dbReference type="ChEBI" id="CHEBI:17319"/>
        <dbReference type="ChEBI" id="CHEBI:33737"/>
        <dbReference type="ChEBI" id="CHEBI:33738"/>
        <dbReference type="ChEBI" id="CHEBI:57844"/>
        <dbReference type="ChEBI" id="CHEBI:57856"/>
        <dbReference type="ChEBI" id="CHEBI:59789"/>
        <dbReference type="ChEBI" id="CHEBI:74411"/>
        <dbReference type="ChEBI" id="CHEBI:74497"/>
        <dbReference type="EC" id="2.1.1.192"/>
    </reaction>
</comment>
<comment type="cofactor">
    <cofactor evidence="1">
        <name>[4Fe-4S] cluster</name>
        <dbReference type="ChEBI" id="CHEBI:49883"/>
    </cofactor>
    <text evidence="1">Binds 1 [4Fe-4S] cluster. The cluster is coordinated with 3 cysteines and an exchangeable S-adenosyl-L-methionine.</text>
</comment>
<comment type="subcellular location">
    <subcellularLocation>
        <location evidence="1">Cytoplasm</location>
    </subcellularLocation>
</comment>
<comment type="miscellaneous">
    <text evidence="1">Reaction proceeds by a ping-pong mechanism involving intermediate methylation of a conserved cysteine residue.</text>
</comment>
<comment type="similarity">
    <text evidence="1">Belongs to the radical SAM superfamily. RlmN family.</text>
</comment>
<comment type="sequence caution" evidence="3">
    <conflict type="erroneous initiation">
        <sequence resource="EMBL-CDS" id="ABX37651"/>
    </conflict>
</comment>
<organism>
    <name type="scientific">Delftia acidovorans (strain DSM 14801 / SPH-1)</name>
    <dbReference type="NCBI Taxonomy" id="398578"/>
    <lineage>
        <taxon>Bacteria</taxon>
        <taxon>Pseudomonadati</taxon>
        <taxon>Pseudomonadota</taxon>
        <taxon>Betaproteobacteria</taxon>
        <taxon>Burkholderiales</taxon>
        <taxon>Comamonadaceae</taxon>
        <taxon>Delftia</taxon>
    </lineage>
</organism>
<evidence type="ECO:0000255" key="1">
    <source>
        <dbReference type="HAMAP-Rule" id="MF_01849"/>
    </source>
</evidence>
<evidence type="ECO:0000255" key="2">
    <source>
        <dbReference type="PROSITE-ProRule" id="PRU01266"/>
    </source>
</evidence>
<evidence type="ECO:0000305" key="3"/>
<feature type="chain" id="PRO_0000350148" description="Dual-specificity RNA methyltransferase RlmN">
    <location>
        <begin position="1"/>
        <end position="374"/>
    </location>
</feature>
<feature type="domain" description="Radical SAM core" evidence="2">
    <location>
        <begin position="97"/>
        <end position="340"/>
    </location>
</feature>
<feature type="active site" description="Proton acceptor" evidence="1">
    <location>
        <position position="91"/>
    </location>
</feature>
<feature type="active site" description="S-methylcysteine intermediate" evidence="1">
    <location>
        <position position="345"/>
    </location>
</feature>
<feature type="binding site" evidence="1">
    <location>
        <position position="111"/>
    </location>
    <ligand>
        <name>[4Fe-4S] cluster</name>
        <dbReference type="ChEBI" id="CHEBI:49883"/>
        <note>4Fe-4S-S-AdoMet</note>
    </ligand>
</feature>
<feature type="binding site" evidence="1">
    <location>
        <position position="115"/>
    </location>
    <ligand>
        <name>[4Fe-4S] cluster</name>
        <dbReference type="ChEBI" id="CHEBI:49883"/>
        <note>4Fe-4S-S-AdoMet</note>
    </ligand>
</feature>
<feature type="binding site" evidence="1">
    <location>
        <position position="118"/>
    </location>
    <ligand>
        <name>[4Fe-4S] cluster</name>
        <dbReference type="ChEBI" id="CHEBI:49883"/>
        <note>4Fe-4S-S-AdoMet</note>
    </ligand>
</feature>
<feature type="binding site" evidence="1">
    <location>
        <begin position="166"/>
        <end position="167"/>
    </location>
    <ligand>
        <name>S-adenosyl-L-methionine</name>
        <dbReference type="ChEBI" id="CHEBI:59789"/>
    </ligand>
</feature>
<feature type="binding site" evidence="1">
    <location>
        <position position="198"/>
    </location>
    <ligand>
        <name>S-adenosyl-L-methionine</name>
        <dbReference type="ChEBI" id="CHEBI:59789"/>
    </ligand>
</feature>
<feature type="binding site" evidence="1">
    <location>
        <begin position="220"/>
        <end position="222"/>
    </location>
    <ligand>
        <name>S-adenosyl-L-methionine</name>
        <dbReference type="ChEBI" id="CHEBI:59789"/>
    </ligand>
</feature>
<feature type="binding site" evidence="1">
    <location>
        <position position="302"/>
    </location>
    <ligand>
        <name>S-adenosyl-L-methionine</name>
        <dbReference type="ChEBI" id="CHEBI:59789"/>
    </ligand>
</feature>
<feature type="disulfide bond" description="(transient)" evidence="1">
    <location>
        <begin position="104"/>
        <end position="345"/>
    </location>
</feature>